<name>VL1_BPV5</name>
<evidence type="ECO:0000255" key="1">
    <source>
        <dbReference type="HAMAP-Rule" id="MF_04002"/>
    </source>
</evidence>
<evidence type="ECO:0000256" key="2">
    <source>
        <dbReference type="SAM" id="MobiDB-lite"/>
    </source>
</evidence>
<evidence type="ECO:0000305" key="3"/>
<accession>P50806</accession>
<accession>Q705G5</accession>
<accession>Q8BDG2</accession>
<organism>
    <name type="scientific">Bovine papillomavirus type 5</name>
    <dbReference type="NCBI Taxonomy" id="2491661"/>
    <lineage>
        <taxon>Viruses</taxon>
        <taxon>Monodnaviria</taxon>
        <taxon>Shotokuvirae</taxon>
        <taxon>Cossaviricota</taxon>
        <taxon>Papovaviricetes</taxon>
        <taxon>Zurhausenvirales</taxon>
        <taxon>Papillomaviridae</taxon>
        <taxon>Firstpapillomavirinae</taxon>
        <taxon>Epsilonpapillomavirus</taxon>
        <taxon>Epsilonpapillomavirus 1</taxon>
    </lineage>
</organism>
<keyword id="KW-0167">Capsid protein</keyword>
<keyword id="KW-1015">Disulfide bond</keyword>
<keyword id="KW-1048">Host nucleus</keyword>
<keyword id="KW-0945">Host-virus interaction</keyword>
<keyword id="KW-0426">Late protein</keyword>
<keyword id="KW-1185">Reference proteome</keyword>
<keyword id="KW-1145">T=7 icosahedral capsid protein</keyword>
<keyword id="KW-1161">Viral attachment to host cell</keyword>
<keyword id="KW-1162">Viral penetration into host cytoplasm</keyword>
<keyword id="KW-0946">Virion</keyword>
<keyword id="KW-1164">Virus endocytosis by host</keyword>
<keyword id="KW-1160">Virus entry into host cell</keyword>
<comment type="function">
    <text evidence="1">Forms an icosahedral capsid with a T=7 symmetry and a 50 nm diameter. The capsid is composed of 72 pentamers linked to each other by disulfide bonds and associated with L2 proteins. Binds to heparan sulfate proteoglycans on cell surface of basal layer keratinocytes to provide initial virion attachment. This binding mediates a conformational change in the virus capsid that facilitates efficient infection. The virion enters the host cell via endocytosis. During virus trafficking, L1 protein dissociates from the viral DNA and the genomic DNA is released to the host nucleus. The virion assembly takes place within the cell nucleus. Encapsulates the genomic DNA together with protein L2.</text>
</comment>
<comment type="subunit">
    <text evidence="1">Self-assembles into homopentamers. The capsid has an icosahedral symmetry and consists of 72 capsomers, with each capsomer being a pentamer of L1. Interacts with the minor capsid protein L2; this interaction is necessary for viral genome encapsidation. Interacts with protein E2; this interaction enhances E2-dependent replication and transcription activation.</text>
</comment>
<comment type="subcellular location">
    <subcellularLocation>
        <location evidence="1">Virion</location>
    </subcellularLocation>
    <subcellularLocation>
        <location evidence="1">Host nucleus</location>
    </subcellularLocation>
</comment>
<comment type="similarity">
    <text evidence="1">Belongs to the papillomaviridae L1 protein family.</text>
</comment>
<proteinExistence type="inferred from homology"/>
<reference key="1">
    <citation type="submission" date="2004-01" db="EMBL/GenBank/DDBJ databases">
        <title>Sequencing of the complete genomes of BPV 3, BPV 5 and BPV 6.</title>
        <authorList>
            <person name="Delius H."/>
            <person name="de Villiers E.M."/>
        </authorList>
    </citation>
    <scope>NUCLEOTIDE SEQUENCE [GENOMIC DNA]</scope>
</reference>
<reference key="2">
    <citation type="journal article" date="2002" name="J. Virol.">
        <title>Lack of canonical E6 and E7 open reading frames in bird papillomaviruses: Fringilla coelebs papillomavirus and Psittacus erithacus timneh papillomavirus.</title>
        <authorList>
            <person name="Terai M."/>
            <person name="DeSalle R."/>
            <person name="Burk R.D."/>
        </authorList>
    </citation>
    <scope>NUCLEOTIDE SEQUENCE [GENOMIC DNA]</scope>
</reference>
<reference key="3">
    <citation type="journal article" date="1995" name="J. Virol.">
        <title>Analysis of genomic sequences of 95 papillomavirus types: uniting typing, phylogeny, and taxonomy.</title>
        <authorList>
            <person name="Chan S.-Y."/>
            <person name="Delius H."/>
            <person name="Halpern A.L."/>
            <person name="Bernard H.U."/>
        </authorList>
    </citation>
    <scope>NUCLEOTIDE SEQUENCE [GENOMIC DNA] OF 359-453</scope>
</reference>
<dbReference type="EMBL" id="AJ620206">
    <property type="protein sequence ID" value="CAF05676.1"/>
    <property type="molecule type" value="Genomic_DNA"/>
</dbReference>
<dbReference type="EMBL" id="AF457465">
    <property type="protein sequence ID" value="AAN09929.1"/>
    <property type="molecule type" value="Genomic_DNA"/>
</dbReference>
<dbReference type="EMBL" id="U21863">
    <property type="protein sequence ID" value="AAA92826.1"/>
    <property type="molecule type" value="Genomic_DNA"/>
</dbReference>
<dbReference type="RefSeq" id="NP_694435.1">
    <property type="nucleotide sequence ID" value="NC_004195.1"/>
</dbReference>
<dbReference type="SMR" id="P50806"/>
<dbReference type="GeneID" id="955406"/>
<dbReference type="KEGG" id="vg:955406"/>
<dbReference type="Proteomes" id="UP000008785">
    <property type="component" value="Genome"/>
</dbReference>
<dbReference type="Proteomes" id="UP000185273">
    <property type="component" value="Genome"/>
</dbReference>
<dbReference type="GO" id="GO:0042025">
    <property type="term" value="C:host cell nucleus"/>
    <property type="evidence" value="ECO:0007669"/>
    <property type="project" value="UniProtKB-SubCell"/>
</dbReference>
<dbReference type="GO" id="GO:0039620">
    <property type="term" value="C:T=7 icosahedral viral capsid"/>
    <property type="evidence" value="ECO:0007669"/>
    <property type="project" value="UniProtKB-UniRule"/>
</dbReference>
<dbReference type="GO" id="GO:0005198">
    <property type="term" value="F:structural molecule activity"/>
    <property type="evidence" value="ECO:0007669"/>
    <property type="project" value="UniProtKB-UniRule"/>
</dbReference>
<dbReference type="GO" id="GO:0075509">
    <property type="term" value="P:endocytosis involved in viral entry into host cell"/>
    <property type="evidence" value="ECO:0007669"/>
    <property type="project" value="UniProtKB-KW"/>
</dbReference>
<dbReference type="GO" id="GO:0019062">
    <property type="term" value="P:virion attachment to host cell"/>
    <property type="evidence" value="ECO:0007669"/>
    <property type="project" value="UniProtKB-UniRule"/>
</dbReference>
<dbReference type="Gene3D" id="2.60.175.20">
    <property type="entry name" value="Major capsid L1 (late) superfamily, Papillomavirus"/>
    <property type="match status" value="1"/>
</dbReference>
<dbReference type="HAMAP" id="MF_04002">
    <property type="entry name" value="PPV_L1"/>
    <property type="match status" value="1"/>
</dbReference>
<dbReference type="InterPro" id="IPR002210">
    <property type="entry name" value="Capsid_L1_Papillomavir"/>
</dbReference>
<dbReference type="InterPro" id="IPR036973">
    <property type="entry name" value="Capsid_L1_sf_Papillomavir"/>
</dbReference>
<dbReference type="InterPro" id="IPR011222">
    <property type="entry name" value="dsDNA_vir_gr_I_capsid"/>
</dbReference>
<dbReference type="Pfam" id="PF00500">
    <property type="entry name" value="Late_protein_L1"/>
    <property type="match status" value="1"/>
</dbReference>
<dbReference type="PRINTS" id="PR00865">
    <property type="entry name" value="HPVCAPSIDL1"/>
</dbReference>
<dbReference type="SUPFAM" id="SSF88648">
    <property type="entry name" value="Group I dsDNA viruses"/>
    <property type="match status" value="1"/>
</dbReference>
<sequence>MAVWQQQGQRLYFPPNPVTKVLCTESYVKRTSIFYHGETERLLTVGHPYWKIPEQNIPKVSGNQYRVFRVQLPDPNQFALPDKNLHNPAKERLVWAILGLQVSRGQPLGAPVTGNQLFNVWTDAENVTAKRALPGSDDRKQLGMDVKQTQMLLIGQSPAIGEYWGKAIPCEGKQPKAGDCPPIELKNKPIEDGDMMDIGFGACDWKDFSQNLSDVPLDLINSKSLYPDYLKMAEDSLGNSCFFYARREQVYVRHVYSRGGEQKEAIPKDMTLPQQVPDNKDTSFTFMGTPSGSLVSTDGQLFNRPYWLYQAQGLNNGVCWDNELFITVGDNSRGGVFTISVPVDDRKPEQYNSANMNIYCRHVEEYKLAVILELCSVELTSETVAYLQTVNPSVLEKWEVGVNPPPATVLEDTYRYQESKAIKCIDQTAAAKKDKYENLSFWNIDLREKLSADLDQYPLGRRFLAQNGITCSRKRLRPASTKKSTTNKKRKTSR</sequence>
<organismHost>
    <name type="scientific">Bos taurus</name>
    <name type="common">Bovine</name>
    <dbReference type="NCBI Taxonomy" id="9913"/>
</organismHost>
<protein>
    <recommendedName>
        <fullName evidence="1">Major capsid protein L1</fullName>
    </recommendedName>
</protein>
<gene>
    <name evidence="1" type="primary">L1</name>
</gene>
<feature type="chain" id="PRO_0000133479" description="Major capsid protein L1">
    <location>
        <begin position="1"/>
        <end position="494"/>
    </location>
</feature>
<feature type="region of interest" description="Disordered" evidence="2">
    <location>
        <begin position="475"/>
        <end position="494"/>
    </location>
</feature>
<feature type="compositionally biased region" description="Basic residues" evidence="2">
    <location>
        <begin position="485"/>
        <end position="494"/>
    </location>
</feature>
<feature type="disulfide bond" description="Interchain (with C-424)" evidence="1">
    <location>
        <position position="170"/>
    </location>
</feature>
<feature type="disulfide bond" description="Interchain (with C-170)" evidence="1">
    <location>
        <position position="424"/>
    </location>
</feature>
<feature type="sequence conflict" description="In Ref. 2; AAN09929." evidence="3" ref="2">
    <original>QS</original>
    <variation>CT</variation>
    <location>
        <begin position="156"/>
        <end position="157"/>
    </location>
</feature>
<feature type="sequence conflict" description="In Ref. 3; AAA92826." evidence="3" ref="3">
    <original>S</original>
    <variation>Y</variation>
    <location>
        <position position="381"/>
    </location>
</feature>